<name>CCPR_EMENI</name>
<sequence>MASAARSASRAFLRSSLRPAVRSSRFALPTQGLRVASRRGYSSEASSGKSSNTLLWAGVALAGGAGAYFYLQGGDVGASTKVFTPTKEDYQKVYNAIAERLANETDYDDGSYGPVLVRLAWHASGTYDAETGTGGSNGATMRFAPESDHGANAGLKYARDFLEPIKAKFPWITYSDLWTLAGACAIQELGGPDIPWRPGRQDKDVSGCTPDGRLPDATKNQDHIRAIFGRMGFDDREMVALIGAHALGRAHTDRSGFDGPWNFSPTVFTNEFFRLLVEEKWQPRKWNGPKQFTDNTTKTLMMFPTDLALVQDKGFRKHVERYAKDSDAFFKEFSEVFVKLLELGVPFNSKVEDRYVFKRSE</sequence>
<comment type="function">
    <text evidence="2">Destroys radicals which are normally produced within the cells and which are toxic to biological systems.</text>
</comment>
<comment type="catalytic activity">
    <reaction evidence="2">
        <text>2 Fe(II)-[cytochrome c] + H2O2 + 2 H(+) = 2 Fe(III)-[cytochrome c] + 2 H2O</text>
        <dbReference type="Rhea" id="RHEA:16581"/>
        <dbReference type="Rhea" id="RHEA-COMP:10350"/>
        <dbReference type="Rhea" id="RHEA-COMP:14399"/>
        <dbReference type="ChEBI" id="CHEBI:15377"/>
        <dbReference type="ChEBI" id="CHEBI:15378"/>
        <dbReference type="ChEBI" id="CHEBI:16240"/>
        <dbReference type="ChEBI" id="CHEBI:29033"/>
        <dbReference type="ChEBI" id="CHEBI:29034"/>
        <dbReference type="EC" id="1.11.1.5"/>
    </reaction>
</comment>
<comment type="cofactor">
    <cofactor evidence="4">
        <name>heme b</name>
        <dbReference type="ChEBI" id="CHEBI:60344"/>
    </cofactor>
    <text evidence="4">Binds 1 heme b (iron(II)-protoporphyrin IX) group per subunit.</text>
</comment>
<comment type="subunit">
    <text evidence="2">Forms a one-to-one complex with cytochrome c.</text>
</comment>
<comment type="subcellular location">
    <subcellularLocation>
        <location evidence="2">Mitochondrion matrix</location>
    </subcellularLocation>
    <subcellularLocation>
        <location evidence="2">Mitochondrion intermembrane space</location>
    </subcellularLocation>
</comment>
<comment type="similarity">
    <text evidence="6">Belongs to the peroxidase family. Cytochrome c peroxidase subfamily.</text>
</comment>
<comment type="sequence caution" evidence="6">
    <conflict type="erroneous gene model prediction">
        <sequence resource="EMBL-CDS" id="EAA64750"/>
    </conflict>
    <text>The predicted gene AN1630 has been split into 2 genes: AN10220 and AN10224.</text>
</comment>
<protein>
    <recommendedName>
        <fullName>Cytochrome c peroxidase, mitochondrial</fullName>
        <shortName>CCP</shortName>
        <ecNumber evidence="2">1.11.1.5</ecNumber>
    </recommendedName>
</protein>
<dbReference type="EC" id="1.11.1.5" evidence="2"/>
<dbReference type="EMBL" id="AACD01000026">
    <property type="protein sequence ID" value="EAA64750.1"/>
    <property type="status" value="ALT_SEQ"/>
    <property type="molecule type" value="Genomic_DNA"/>
</dbReference>
<dbReference type="EMBL" id="BN001307">
    <property type="protein sequence ID" value="CBF85254.1"/>
    <property type="molecule type" value="Genomic_DNA"/>
</dbReference>
<dbReference type="SMR" id="P0C0V3"/>
<dbReference type="FunCoup" id="P0C0V3">
    <property type="interactions" value="75"/>
</dbReference>
<dbReference type="STRING" id="227321.P0C0V3"/>
<dbReference type="PeroxiBase" id="2359">
    <property type="entry name" value="AniCcP02"/>
</dbReference>
<dbReference type="EnsemblFungi" id="CBF85254">
    <property type="protein sequence ID" value="CBF85254"/>
    <property type="gene ID" value="ANIA_10220"/>
</dbReference>
<dbReference type="VEuPathDB" id="FungiDB:AN10220"/>
<dbReference type="eggNOG" id="ENOG502QR1E">
    <property type="taxonomic scope" value="Eukaryota"/>
</dbReference>
<dbReference type="HOGENOM" id="CLU_036959_1_2_1"/>
<dbReference type="InParanoid" id="P0C0V3"/>
<dbReference type="OMA" id="QRKWNGP"/>
<dbReference type="OrthoDB" id="2859658at2759"/>
<dbReference type="Proteomes" id="UP000000560">
    <property type="component" value="Chromosome VII"/>
</dbReference>
<dbReference type="GO" id="GO:0005758">
    <property type="term" value="C:mitochondrial intermembrane space"/>
    <property type="evidence" value="ECO:0007669"/>
    <property type="project" value="UniProtKB-SubCell"/>
</dbReference>
<dbReference type="GO" id="GO:0005759">
    <property type="term" value="C:mitochondrial matrix"/>
    <property type="evidence" value="ECO:0007669"/>
    <property type="project" value="UniProtKB-SubCell"/>
</dbReference>
<dbReference type="GO" id="GO:0004130">
    <property type="term" value="F:cytochrome-c peroxidase activity"/>
    <property type="evidence" value="ECO:0007669"/>
    <property type="project" value="UniProtKB-EC"/>
</dbReference>
<dbReference type="GO" id="GO:0020037">
    <property type="term" value="F:heme binding"/>
    <property type="evidence" value="ECO:0007669"/>
    <property type="project" value="InterPro"/>
</dbReference>
<dbReference type="GO" id="GO:0046872">
    <property type="term" value="F:metal ion binding"/>
    <property type="evidence" value="ECO:0007669"/>
    <property type="project" value="UniProtKB-KW"/>
</dbReference>
<dbReference type="GO" id="GO:0004601">
    <property type="term" value="F:peroxidase activity"/>
    <property type="evidence" value="ECO:0000318"/>
    <property type="project" value="GO_Central"/>
</dbReference>
<dbReference type="GO" id="GO:0034599">
    <property type="term" value="P:cellular response to oxidative stress"/>
    <property type="evidence" value="ECO:0000318"/>
    <property type="project" value="GO_Central"/>
</dbReference>
<dbReference type="GO" id="GO:0042744">
    <property type="term" value="P:hydrogen peroxide catabolic process"/>
    <property type="evidence" value="ECO:0000318"/>
    <property type="project" value="GO_Central"/>
</dbReference>
<dbReference type="GO" id="GO:0000302">
    <property type="term" value="P:response to reactive oxygen species"/>
    <property type="evidence" value="ECO:0000318"/>
    <property type="project" value="GO_Central"/>
</dbReference>
<dbReference type="CDD" id="cd00691">
    <property type="entry name" value="ascorbate_peroxidase"/>
    <property type="match status" value="1"/>
</dbReference>
<dbReference type="FunFam" id="1.10.420.10:FF:000009">
    <property type="entry name" value="Ascorbate peroxidase"/>
    <property type="match status" value="1"/>
</dbReference>
<dbReference type="FunFam" id="1.10.520.10:FF:000005">
    <property type="entry name" value="Cytochrome c peroxidase"/>
    <property type="match status" value="1"/>
</dbReference>
<dbReference type="Gene3D" id="1.10.520.10">
    <property type="match status" value="1"/>
</dbReference>
<dbReference type="Gene3D" id="1.10.420.10">
    <property type="entry name" value="Peroxidase, domain 2"/>
    <property type="match status" value="1"/>
</dbReference>
<dbReference type="InterPro" id="IPR044831">
    <property type="entry name" value="Ccp1-like"/>
</dbReference>
<dbReference type="InterPro" id="IPR002016">
    <property type="entry name" value="Haem_peroxidase"/>
</dbReference>
<dbReference type="InterPro" id="IPR010255">
    <property type="entry name" value="Haem_peroxidase_sf"/>
</dbReference>
<dbReference type="InterPro" id="IPR002207">
    <property type="entry name" value="Peroxidase_I"/>
</dbReference>
<dbReference type="InterPro" id="IPR019794">
    <property type="entry name" value="Peroxidases_AS"/>
</dbReference>
<dbReference type="InterPro" id="IPR019793">
    <property type="entry name" value="Peroxidases_heam-ligand_BS"/>
</dbReference>
<dbReference type="PANTHER" id="PTHR31356:SF58">
    <property type="entry name" value="CYTOCHROME C PEROXIDASE, MITOCHONDRIAL"/>
    <property type="match status" value="1"/>
</dbReference>
<dbReference type="PANTHER" id="PTHR31356">
    <property type="entry name" value="THYLAKOID LUMENAL 29 KDA PROTEIN, CHLOROPLASTIC-RELATED"/>
    <property type="match status" value="1"/>
</dbReference>
<dbReference type="Pfam" id="PF00141">
    <property type="entry name" value="peroxidase"/>
    <property type="match status" value="1"/>
</dbReference>
<dbReference type="PRINTS" id="PR00459">
    <property type="entry name" value="ASPEROXIDASE"/>
</dbReference>
<dbReference type="PRINTS" id="PR00458">
    <property type="entry name" value="PEROXIDASE"/>
</dbReference>
<dbReference type="SUPFAM" id="SSF48113">
    <property type="entry name" value="Heme-dependent peroxidases"/>
    <property type="match status" value="1"/>
</dbReference>
<dbReference type="PROSITE" id="PS00435">
    <property type="entry name" value="PEROXIDASE_1"/>
    <property type="match status" value="1"/>
</dbReference>
<dbReference type="PROSITE" id="PS00436">
    <property type="entry name" value="PEROXIDASE_2"/>
    <property type="match status" value="1"/>
</dbReference>
<dbReference type="PROSITE" id="PS50873">
    <property type="entry name" value="PEROXIDASE_4"/>
    <property type="match status" value="1"/>
</dbReference>
<feature type="transit peptide" description="Mitochondrion" evidence="3">
    <location>
        <begin position="1"/>
        <end position="41"/>
    </location>
</feature>
<feature type="chain" id="PRO_0000045292" description="Cytochrome c peroxidase, mitochondrial">
    <location>
        <begin position="42"/>
        <end position="361"/>
    </location>
</feature>
<feature type="active site" description="Proton acceptor" evidence="4 5">
    <location>
        <position position="122"/>
    </location>
</feature>
<feature type="active site" description="Tryptophan radical intermediate" evidence="1">
    <location>
        <position position="261"/>
    </location>
</feature>
<feature type="binding site" description="axial binding residue">
    <location>
        <position position="245"/>
    </location>
    <ligand>
        <name>heme b</name>
        <dbReference type="ChEBI" id="CHEBI:60344"/>
    </ligand>
    <ligandPart>
        <name>Fe</name>
        <dbReference type="ChEBI" id="CHEBI:18248"/>
    </ligandPart>
</feature>
<feature type="site" description="Transition state stabilizer" evidence="4">
    <location>
        <position position="118"/>
    </location>
</feature>
<accession>P0C0V3</accession>
<accession>C8VNH5</accession>
<accession>Q5BCV0</accession>
<evidence type="ECO:0000250" key="1"/>
<evidence type="ECO:0000250" key="2">
    <source>
        <dbReference type="UniProtKB" id="P00431"/>
    </source>
</evidence>
<evidence type="ECO:0000255" key="3"/>
<evidence type="ECO:0000255" key="4">
    <source>
        <dbReference type="PROSITE-ProRule" id="PRU00297"/>
    </source>
</evidence>
<evidence type="ECO:0000255" key="5">
    <source>
        <dbReference type="PROSITE-ProRule" id="PRU10012"/>
    </source>
</evidence>
<evidence type="ECO:0000305" key="6"/>
<organism>
    <name type="scientific">Emericella nidulans (strain FGSC A4 / ATCC 38163 / CBS 112.46 / NRRL 194 / M139)</name>
    <name type="common">Aspergillus nidulans</name>
    <dbReference type="NCBI Taxonomy" id="227321"/>
    <lineage>
        <taxon>Eukaryota</taxon>
        <taxon>Fungi</taxon>
        <taxon>Dikarya</taxon>
        <taxon>Ascomycota</taxon>
        <taxon>Pezizomycotina</taxon>
        <taxon>Eurotiomycetes</taxon>
        <taxon>Eurotiomycetidae</taxon>
        <taxon>Eurotiales</taxon>
        <taxon>Aspergillaceae</taxon>
        <taxon>Aspergillus</taxon>
        <taxon>Aspergillus subgen. Nidulantes</taxon>
    </lineage>
</organism>
<keyword id="KW-0349">Heme</keyword>
<keyword id="KW-0408">Iron</keyword>
<keyword id="KW-0479">Metal-binding</keyword>
<keyword id="KW-0496">Mitochondrion</keyword>
<keyword id="KW-0560">Oxidoreductase</keyword>
<keyword id="KW-0575">Peroxidase</keyword>
<keyword id="KW-1185">Reference proteome</keyword>
<keyword id="KW-0809">Transit peptide</keyword>
<proteinExistence type="inferred from homology"/>
<reference key="1">
    <citation type="journal article" date="2005" name="Nature">
        <title>Sequencing of Aspergillus nidulans and comparative analysis with A. fumigatus and A. oryzae.</title>
        <authorList>
            <person name="Galagan J.E."/>
            <person name="Calvo S.E."/>
            <person name="Cuomo C."/>
            <person name="Ma L.-J."/>
            <person name="Wortman J.R."/>
            <person name="Batzoglou S."/>
            <person name="Lee S.-I."/>
            <person name="Bastuerkmen M."/>
            <person name="Spevak C.C."/>
            <person name="Clutterbuck J."/>
            <person name="Kapitonov V."/>
            <person name="Jurka J."/>
            <person name="Scazzocchio C."/>
            <person name="Farman M.L."/>
            <person name="Butler J."/>
            <person name="Purcell S."/>
            <person name="Harris S."/>
            <person name="Braus G.H."/>
            <person name="Draht O."/>
            <person name="Busch S."/>
            <person name="D'Enfert C."/>
            <person name="Bouchier C."/>
            <person name="Goldman G.H."/>
            <person name="Bell-Pedersen D."/>
            <person name="Griffiths-Jones S."/>
            <person name="Doonan J.H."/>
            <person name="Yu J."/>
            <person name="Vienken K."/>
            <person name="Pain A."/>
            <person name="Freitag M."/>
            <person name="Selker E.U."/>
            <person name="Archer D.B."/>
            <person name="Penalva M.A."/>
            <person name="Oakley B.R."/>
            <person name="Momany M."/>
            <person name="Tanaka T."/>
            <person name="Kumagai T."/>
            <person name="Asai K."/>
            <person name="Machida M."/>
            <person name="Nierman W.C."/>
            <person name="Denning D.W."/>
            <person name="Caddick M.X."/>
            <person name="Hynes M."/>
            <person name="Paoletti M."/>
            <person name="Fischer R."/>
            <person name="Miller B.L."/>
            <person name="Dyer P.S."/>
            <person name="Sachs M.S."/>
            <person name="Osmani S.A."/>
            <person name="Birren B.W."/>
        </authorList>
    </citation>
    <scope>NUCLEOTIDE SEQUENCE [LARGE SCALE GENOMIC DNA]</scope>
    <source>
        <strain>FGSC A4 / ATCC 38163 / CBS 112.46 / NRRL 194 / M139</strain>
    </source>
</reference>
<reference key="2">
    <citation type="journal article" date="2009" name="Fungal Genet. Biol.">
        <title>The 2008 update of the Aspergillus nidulans genome annotation: a community effort.</title>
        <authorList>
            <person name="Wortman J.R."/>
            <person name="Gilsenan J.M."/>
            <person name="Joardar V."/>
            <person name="Deegan J."/>
            <person name="Clutterbuck J."/>
            <person name="Andersen M.R."/>
            <person name="Archer D."/>
            <person name="Bencina M."/>
            <person name="Braus G."/>
            <person name="Coutinho P."/>
            <person name="von Dohren H."/>
            <person name="Doonan J."/>
            <person name="Driessen A.J."/>
            <person name="Durek P."/>
            <person name="Espeso E."/>
            <person name="Fekete E."/>
            <person name="Flipphi M."/>
            <person name="Estrada C.G."/>
            <person name="Geysens S."/>
            <person name="Goldman G."/>
            <person name="de Groot P.W."/>
            <person name="Hansen K."/>
            <person name="Harris S.D."/>
            <person name="Heinekamp T."/>
            <person name="Helmstaedt K."/>
            <person name="Henrissat B."/>
            <person name="Hofmann G."/>
            <person name="Homan T."/>
            <person name="Horio T."/>
            <person name="Horiuchi H."/>
            <person name="James S."/>
            <person name="Jones M."/>
            <person name="Karaffa L."/>
            <person name="Karanyi Z."/>
            <person name="Kato M."/>
            <person name="Keller N."/>
            <person name="Kelly D.E."/>
            <person name="Kiel J.A."/>
            <person name="Kim J.M."/>
            <person name="van der Klei I.J."/>
            <person name="Klis F.M."/>
            <person name="Kovalchuk A."/>
            <person name="Krasevec N."/>
            <person name="Kubicek C.P."/>
            <person name="Liu B."/>
            <person name="Maccabe A."/>
            <person name="Meyer V."/>
            <person name="Mirabito P."/>
            <person name="Miskei M."/>
            <person name="Mos M."/>
            <person name="Mullins J."/>
            <person name="Nelson D.R."/>
            <person name="Nielsen J."/>
            <person name="Oakley B.R."/>
            <person name="Osmani S.A."/>
            <person name="Pakula T."/>
            <person name="Paszewski A."/>
            <person name="Paulsen I."/>
            <person name="Pilsyk S."/>
            <person name="Pocsi I."/>
            <person name="Punt P.J."/>
            <person name="Ram A.F."/>
            <person name="Ren Q."/>
            <person name="Robellet X."/>
            <person name="Robson G."/>
            <person name="Seiboth B."/>
            <person name="van Solingen P."/>
            <person name="Specht T."/>
            <person name="Sun J."/>
            <person name="Taheri-Talesh N."/>
            <person name="Takeshita N."/>
            <person name="Ussery D."/>
            <person name="vanKuyk P.A."/>
            <person name="Visser H."/>
            <person name="van de Vondervoort P.J."/>
            <person name="de Vries R.P."/>
            <person name="Walton J."/>
            <person name="Xiang X."/>
            <person name="Xiong Y."/>
            <person name="Zeng A.P."/>
            <person name="Brandt B.W."/>
            <person name="Cornell M.J."/>
            <person name="van den Hondel C.A."/>
            <person name="Visser J."/>
            <person name="Oliver S.G."/>
            <person name="Turner G."/>
        </authorList>
    </citation>
    <scope>GENOME REANNOTATION</scope>
    <source>
        <strain>FGSC A4 / ATCC 38163 / CBS 112.46 / NRRL 194 / M139</strain>
    </source>
</reference>
<gene>
    <name type="primary">ccp1</name>
    <name type="ORF">AN10220</name>
</gene>